<dbReference type="EMBL" id="CP001120">
    <property type="protein sequence ID" value="ACF66735.1"/>
    <property type="molecule type" value="Genomic_DNA"/>
</dbReference>
<dbReference type="RefSeq" id="WP_001519746.1">
    <property type="nucleotide sequence ID" value="NC_011083.1"/>
</dbReference>
<dbReference type="SMR" id="B4TD22"/>
<dbReference type="KEGG" id="seh:SeHA_C1060"/>
<dbReference type="HOGENOM" id="CLU_087560_1_1_6"/>
<dbReference type="Proteomes" id="UP000001866">
    <property type="component" value="Chromosome"/>
</dbReference>
<dbReference type="GO" id="GO:0030288">
    <property type="term" value="C:outer membrane-bounded periplasmic space"/>
    <property type="evidence" value="ECO:0007669"/>
    <property type="project" value="TreeGrafter"/>
</dbReference>
<dbReference type="GO" id="GO:0044874">
    <property type="term" value="P:lipoprotein localization to outer membrane"/>
    <property type="evidence" value="ECO:0007669"/>
    <property type="project" value="UniProtKB-UniRule"/>
</dbReference>
<dbReference type="GO" id="GO:0042953">
    <property type="term" value="P:lipoprotein transport"/>
    <property type="evidence" value="ECO:0007669"/>
    <property type="project" value="InterPro"/>
</dbReference>
<dbReference type="CDD" id="cd16325">
    <property type="entry name" value="LolA"/>
    <property type="match status" value="1"/>
</dbReference>
<dbReference type="FunFam" id="2.50.20.10:FF:000001">
    <property type="entry name" value="Outer-membrane lipoprotein carrier protein"/>
    <property type="match status" value="1"/>
</dbReference>
<dbReference type="Gene3D" id="2.50.20.10">
    <property type="entry name" value="Lipoprotein localisation LolA/LolB/LppX"/>
    <property type="match status" value="1"/>
</dbReference>
<dbReference type="HAMAP" id="MF_00240">
    <property type="entry name" value="LolA"/>
    <property type="match status" value="1"/>
</dbReference>
<dbReference type="InterPro" id="IPR029046">
    <property type="entry name" value="LolA/LolB/LppX"/>
</dbReference>
<dbReference type="InterPro" id="IPR004564">
    <property type="entry name" value="OM_lipoprot_carrier_LolA-like"/>
</dbReference>
<dbReference type="InterPro" id="IPR018323">
    <property type="entry name" value="OM_lipoprot_carrier_LolA_Pbac"/>
</dbReference>
<dbReference type="NCBIfam" id="TIGR00547">
    <property type="entry name" value="lolA"/>
    <property type="match status" value="1"/>
</dbReference>
<dbReference type="PANTHER" id="PTHR35869">
    <property type="entry name" value="OUTER-MEMBRANE LIPOPROTEIN CARRIER PROTEIN"/>
    <property type="match status" value="1"/>
</dbReference>
<dbReference type="PANTHER" id="PTHR35869:SF1">
    <property type="entry name" value="OUTER-MEMBRANE LIPOPROTEIN CARRIER PROTEIN"/>
    <property type="match status" value="1"/>
</dbReference>
<dbReference type="Pfam" id="PF03548">
    <property type="entry name" value="LolA"/>
    <property type="match status" value="1"/>
</dbReference>
<dbReference type="SUPFAM" id="SSF89392">
    <property type="entry name" value="Prokaryotic lipoproteins and lipoprotein localization factors"/>
    <property type="match status" value="1"/>
</dbReference>
<protein>
    <recommendedName>
        <fullName evidence="1">Outer-membrane lipoprotein carrier protein</fullName>
    </recommendedName>
</protein>
<reference key="1">
    <citation type="journal article" date="2011" name="J. Bacteriol.">
        <title>Comparative genomics of 28 Salmonella enterica isolates: evidence for CRISPR-mediated adaptive sublineage evolution.</title>
        <authorList>
            <person name="Fricke W.F."/>
            <person name="Mammel M.K."/>
            <person name="McDermott P.F."/>
            <person name="Tartera C."/>
            <person name="White D.G."/>
            <person name="Leclerc J.E."/>
            <person name="Ravel J."/>
            <person name="Cebula T.A."/>
        </authorList>
    </citation>
    <scope>NUCLEOTIDE SEQUENCE [LARGE SCALE GENOMIC DNA]</scope>
    <source>
        <strain>SL476</strain>
    </source>
</reference>
<accession>B4TD22</accession>
<proteinExistence type="inferred from homology"/>
<comment type="function">
    <text evidence="1">Participates in the translocation of lipoproteins from the inner membrane to the outer membrane. Only forms a complex with a lipoprotein if the residue after the N-terminal Cys is not an aspartate (The Asp acts as a targeting signal to indicate that the lipoprotein should stay in the inner membrane).</text>
</comment>
<comment type="subunit">
    <text evidence="1">Monomer.</text>
</comment>
<comment type="subcellular location">
    <subcellularLocation>
        <location evidence="1">Periplasm</location>
    </subcellularLocation>
</comment>
<comment type="similarity">
    <text evidence="1">Belongs to the LolA family.</text>
</comment>
<name>LOLA_SALHS</name>
<evidence type="ECO:0000255" key="1">
    <source>
        <dbReference type="HAMAP-Rule" id="MF_00240"/>
    </source>
</evidence>
<evidence type="ECO:0000256" key="2">
    <source>
        <dbReference type="SAM" id="MobiDB-lite"/>
    </source>
</evidence>
<gene>
    <name evidence="1" type="primary">lolA</name>
    <name type="ordered locus">SeHA_C1060</name>
</gene>
<sequence>MKKMAIACALLSSVVASSVWADAASSLKSRLDKVSSFHATFTQKVTDGSGAAVQEGQGDLWVKRPNLFNWHMTQPDESILVSDGKTLWFYNPFVEQATATWLKDATGNTPFMLIARNQASDWQQYNIKQDGDNFVLTPKASNGNLKQFTINVGRDGTIHQFSAVEQDDQRSAYQLKSQQNGAVDPSKFTFTPPQGVTIDDQRK</sequence>
<organism>
    <name type="scientific">Salmonella heidelberg (strain SL476)</name>
    <dbReference type="NCBI Taxonomy" id="454169"/>
    <lineage>
        <taxon>Bacteria</taxon>
        <taxon>Pseudomonadati</taxon>
        <taxon>Pseudomonadota</taxon>
        <taxon>Gammaproteobacteria</taxon>
        <taxon>Enterobacterales</taxon>
        <taxon>Enterobacteriaceae</taxon>
        <taxon>Salmonella</taxon>
    </lineage>
</organism>
<keyword id="KW-0143">Chaperone</keyword>
<keyword id="KW-0574">Periplasm</keyword>
<keyword id="KW-0653">Protein transport</keyword>
<keyword id="KW-0732">Signal</keyword>
<keyword id="KW-0813">Transport</keyword>
<feature type="signal peptide" evidence="1">
    <location>
        <begin position="1"/>
        <end position="21"/>
    </location>
</feature>
<feature type="chain" id="PRO_1000100725" description="Outer-membrane lipoprotein carrier protein">
    <location>
        <begin position="22"/>
        <end position="203"/>
    </location>
</feature>
<feature type="region of interest" description="Disordered" evidence="2">
    <location>
        <begin position="178"/>
        <end position="203"/>
    </location>
</feature>